<organism>
    <name type="scientific">Shewanella sp. (strain MR-4)</name>
    <dbReference type="NCBI Taxonomy" id="60480"/>
    <lineage>
        <taxon>Bacteria</taxon>
        <taxon>Pseudomonadati</taxon>
        <taxon>Pseudomonadota</taxon>
        <taxon>Gammaproteobacteria</taxon>
        <taxon>Alteromonadales</taxon>
        <taxon>Shewanellaceae</taxon>
        <taxon>Shewanella</taxon>
    </lineage>
</organism>
<dbReference type="EC" id="1.3.1.98" evidence="1"/>
<dbReference type="EMBL" id="CP000446">
    <property type="protein sequence ID" value="ABI37262.1"/>
    <property type="status" value="ALT_INIT"/>
    <property type="molecule type" value="Genomic_DNA"/>
</dbReference>
<dbReference type="RefSeq" id="WP_041408944.1">
    <property type="nucleotide sequence ID" value="NC_008321.1"/>
</dbReference>
<dbReference type="SMR" id="Q0HNV5"/>
<dbReference type="KEGG" id="she:Shewmr4_0181"/>
<dbReference type="HOGENOM" id="CLU_035304_0_0_6"/>
<dbReference type="UniPathway" id="UPA00219"/>
<dbReference type="GO" id="GO:0005829">
    <property type="term" value="C:cytosol"/>
    <property type="evidence" value="ECO:0007669"/>
    <property type="project" value="TreeGrafter"/>
</dbReference>
<dbReference type="GO" id="GO:0071949">
    <property type="term" value="F:FAD binding"/>
    <property type="evidence" value="ECO:0007669"/>
    <property type="project" value="InterPro"/>
</dbReference>
<dbReference type="GO" id="GO:0008762">
    <property type="term" value="F:UDP-N-acetylmuramate dehydrogenase activity"/>
    <property type="evidence" value="ECO:0007669"/>
    <property type="project" value="UniProtKB-UniRule"/>
</dbReference>
<dbReference type="GO" id="GO:0051301">
    <property type="term" value="P:cell division"/>
    <property type="evidence" value="ECO:0007669"/>
    <property type="project" value="UniProtKB-KW"/>
</dbReference>
<dbReference type="GO" id="GO:0071555">
    <property type="term" value="P:cell wall organization"/>
    <property type="evidence" value="ECO:0007669"/>
    <property type="project" value="UniProtKB-KW"/>
</dbReference>
<dbReference type="GO" id="GO:0009252">
    <property type="term" value="P:peptidoglycan biosynthetic process"/>
    <property type="evidence" value="ECO:0007669"/>
    <property type="project" value="UniProtKB-UniRule"/>
</dbReference>
<dbReference type="GO" id="GO:0008360">
    <property type="term" value="P:regulation of cell shape"/>
    <property type="evidence" value="ECO:0007669"/>
    <property type="project" value="UniProtKB-KW"/>
</dbReference>
<dbReference type="Gene3D" id="3.30.465.10">
    <property type="match status" value="1"/>
</dbReference>
<dbReference type="Gene3D" id="3.90.78.10">
    <property type="entry name" value="UDP-N-acetylenolpyruvoylglucosamine reductase, C-terminal domain"/>
    <property type="match status" value="1"/>
</dbReference>
<dbReference type="Gene3D" id="3.30.43.10">
    <property type="entry name" value="Uridine Diphospho-n-acetylenolpyruvylglucosamine Reductase, domain 2"/>
    <property type="match status" value="1"/>
</dbReference>
<dbReference type="HAMAP" id="MF_00037">
    <property type="entry name" value="MurB"/>
    <property type="match status" value="1"/>
</dbReference>
<dbReference type="InterPro" id="IPR016166">
    <property type="entry name" value="FAD-bd_PCMH"/>
</dbReference>
<dbReference type="InterPro" id="IPR036318">
    <property type="entry name" value="FAD-bd_PCMH-like_sf"/>
</dbReference>
<dbReference type="InterPro" id="IPR016167">
    <property type="entry name" value="FAD-bd_PCMH_sub1"/>
</dbReference>
<dbReference type="InterPro" id="IPR016169">
    <property type="entry name" value="FAD-bd_PCMH_sub2"/>
</dbReference>
<dbReference type="InterPro" id="IPR003170">
    <property type="entry name" value="MurB"/>
</dbReference>
<dbReference type="InterPro" id="IPR011601">
    <property type="entry name" value="MurB_C"/>
</dbReference>
<dbReference type="InterPro" id="IPR036635">
    <property type="entry name" value="MurB_C_sf"/>
</dbReference>
<dbReference type="InterPro" id="IPR006094">
    <property type="entry name" value="Oxid_FAD_bind_N"/>
</dbReference>
<dbReference type="NCBIfam" id="TIGR00179">
    <property type="entry name" value="murB"/>
    <property type="match status" value="1"/>
</dbReference>
<dbReference type="NCBIfam" id="NF000755">
    <property type="entry name" value="PRK00046.1"/>
    <property type="match status" value="1"/>
</dbReference>
<dbReference type="NCBIfam" id="NF010478">
    <property type="entry name" value="PRK13903.1"/>
    <property type="match status" value="1"/>
</dbReference>
<dbReference type="PANTHER" id="PTHR21071">
    <property type="entry name" value="UDP-N-ACETYLENOLPYRUVOYLGLUCOSAMINE REDUCTASE"/>
    <property type="match status" value="1"/>
</dbReference>
<dbReference type="PANTHER" id="PTHR21071:SF4">
    <property type="entry name" value="UDP-N-ACETYLENOLPYRUVOYLGLUCOSAMINE REDUCTASE"/>
    <property type="match status" value="1"/>
</dbReference>
<dbReference type="Pfam" id="PF01565">
    <property type="entry name" value="FAD_binding_4"/>
    <property type="match status" value="1"/>
</dbReference>
<dbReference type="Pfam" id="PF02873">
    <property type="entry name" value="MurB_C"/>
    <property type="match status" value="1"/>
</dbReference>
<dbReference type="SUPFAM" id="SSF56176">
    <property type="entry name" value="FAD-binding/transporter-associated domain-like"/>
    <property type="match status" value="1"/>
</dbReference>
<dbReference type="SUPFAM" id="SSF56194">
    <property type="entry name" value="Uridine diphospho-N-Acetylenolpyruvylglucosamine reductase, MurB, C-terminal domain"/>
    <property type="match status" value="1"/>
</dbReference>
<dbReference type="PROSITE" id="PS51387">
    <property type="entry name" value="FAD_PCMH"/>
    <property type="match status" value="1"/>
</dbReference>
<evidence type="ECO:0000255" key="1">
    <source>
        <dbReference type="HAMAP-Rule" id="MF_00037"/>
    </source>
</evidence>
<evidence type="ECO:0000305" key="2"/>
<gene>
    <name evidence="1" type="primary">murB</name>
    <name type="ordered locus">Shewmr4_0181</name>
</gene>
<reference key="1">
    <citation type="submission" date="2006-08" db="EMBL/GenBank/DDBJ databases">
        <title>Complete sequence of Shewanella sp. MR-4.</title>
        <authorList>
            <consortium name="US DOE Joint Genome Institute"/>
            <person name="Copeland A."/>
            <person name="Lucas S."/>
            <person name="Lapidus A."/>
            <person name="Barry K."/>
            <person name="Detter J.C."/>
            <person name="Glavina del Rio T."/>
            <person name="Hammon N."/>
            <person name="Israni S."/>
            <person name="Dalin E."/>
            <person name="Tice H."/>
            <person name="Pitluck S."/>
            <person name="Kiss H."/>
            <person name="Brettin T."/>
            <person name="Bruce D."/>
            <person name="Han C."/>
            <person name="Tapia R."/>
            <person name="Gilna P."/>
            <person name="Schmutz J."/>
            <person name="Larimer F."/>
            <person name="Land M."/>
            <person name="Hauser L."/>
            <person name="Kyrpides N."/>
            <person name="Mikhailova N."/>
            <person name="Nealson K."/>
            <person name="Konstantinidis K."/>
            <person name="Klappenbach J."/>
            <person name="Tiedje J."/>
            <person name="Richardson P."/>
        </authorList>
    </citation>
    <scope>NUCLEOTIDE SEQUENCE [LARGE SCALE GENOMIC DNA]</scope>
    <source>
        <strain>MR-4</strain>
    </source>
</reference>
<proteinExistence type="inferred from homology"/>
<sequence>MSFPYSLKPFNTFGVEQSCLSMIEVHSKAELQSTCLSLYQSKRPMLVLGGGSNIVFTDDFNGTVVRVLTKGISCSEDGTHFYLAVEAGENWHELVHFSLNQDMPGLENLALIPGTVGAAPIQNIGAYGVELCDICDWVEYLDLESGNLLRLTADECEFAYRESIFKGCLRDKAVITAVGLRLPKAWQPKLAYGPLQSFNAETVTPREIFERVCEVRSEKLPNPEELGNAGSFFKNPIVSAATYMQLAAHFPSIVGYAQPNGEVKLAAGWLIEHAGLKGFALGNAGVHAKQALVLVNLGHATGQDICRLALHVIARVNEVFGVKLEAEPRIMGLTGETSLDV</sequence>
<protein>
    <recommendedName>
        <fullName evidence="1">UDP-N-acetylenolpyruvoylglucosamine reductase</fullName>
        <ecNumber evidence="1">1.3.1.98</ecNumber>
    </recommendedName>
    <alternativeName>
        <fullName evidence="1">UDP-N-acetylmuramate dehydrogenase</fullName>
    </alternativeName>
</protein>
<keyword id="KW-0131">Cell cycle</keyword>
<keyword id="KW-0132">Cell division</keyword>
<keyword id="KW-0133">Cell shape</keyword>
<keyword id="KW-0961">Cell wall biogenesis/degradation</keyword>
<keyword id="KW-0963">Cytoplasm</keyword>
<keyword id="KW-0274">FAD</keyword>
<keyword id="KW-0285">Flavoprotein</keyword>
<keyword id="KW-0521">NADP</keyword>
<keyword id="KW-0560">Oxidoreductase</keyword>
<keyword id="KW-0573">Peptidoglycan synthesis</keyword>
<comment type="function">
    <text evidence="1">Cell wall formation.</text>
</comment>
<comment type="catalytic activity">
    <reaction evidence="1">
        <text>UDP-N-acetyl-alpha-D-muramate + NADP(+) = UDP-N-acetyl-3-O-(1-carboxyvinyl)-alpha-D-glucosamine + NADPH + H(+)</text>
        <dbReference type="Rhea" id="RHEA:12248"/>
        <dbReference type="ChEBI" id="CHEBI:15378"/>
        <dbReference type="ChEBI" id="CHEBI:57783"/>
        <dbReference type="ChEBI" id="CHEBI:58349"/>
        <dbReference type="ChEBI" id="CHEBI:68483"/>
        <dbReference type="ChEBI" id="CHEBI:70757"/>
        <dbReference type="EC" id="1.3.1.98"/>
    </reaction>
</comment>
<comment type="cofactor">
    <cofactor evidence="1">
        <name>FAD</name>
        <dbReference type="ChEBI" id="CHEBI:57692"/>
    </cofactor>
</comment>
<comment type="pathway">
    <text evidence="1">Cell wall biogenesis; peptidoglycan biosynthesis.</text>
</comment>
<comment type="subcellular location">
    <subcellularLocation>
        <location evidence="1">Cytoplasm</location>
    </subcellularLocation>
</comment>
<comment type="similarity">
    <text evidence="1">Belongs to the MurB family.</text>
</comment>
<comment type="sequence caution" evidence="2">
    <conflict type="erroneous initiation">
        <sequence resource="EMBL-CDS" id="ABI37262"/>
    </conflict>
</comment>
<name>MURB_SHESM</name>
<feature type="chain" id="PRO_0000332503" description="UDP-N-acetylenolpyruvoylglucosamine reductase">
    <location>
        <begin position="1"/>
        <end position="341"/>
    </location>
</feature>
<feature type="domain" description="FAD-binding PCMH-type" evidence="1">
    <location>
        <begin position="13"/>
        <end position="185"/>
    </location>
</feature>
<feature type="active site" evidence="1">
    <location>
        <position position="161"/>
    </location>
</feature>
<feature type="active site" description="Proton donor" evidence="1">
    <location>
        <position position="231"/>
    </location>
</feature>
<feature type="active site" evidence="1">
    <location>
        <position position="327"/>
    </location>
</feature>
<accession>Q0HNV5</accession>